<reference key="1">
    <citation type="journal article" date="1994" name="Biochemistry">
        <title>Solution structure of RP 71955, a new 21 amino acid tricyclic peptide active against HIV-1 virus.</title>
        <authorList>
            <person name="Frechet D."/>
            <person name="Guitton J.D."/>
            <person name="Herman F."/>
            <person name="Faucher D."/>
            <person name="Helynck G."/>
            <person name="Monegier du Sorbier B."/>
            <person name="Ridoux J.P."/>
            <person name="James-Surcouf E."/>
            <person name="Vuilhorgne M."/>
        </authorList>
    </citation>
    <scope>PROTEIN SEQUENCE</scope>
    <scope>STRUCTURE BY NMR</scope>
    <scope>DISULFIDE BONDS</scope>
    <scope>CROSS-LINK</scope>
</reference>
<accession>P37046</accession>
<accession>Q7M104</accession>
<organism>
    <name type="scientific">Streptomyces sp. (strain SP9440)</name>
    <dbReference type="NCBI Taxonomy" id="72594"/>
    <lineage>
        <taxon>Bacteria</taxon>
        <taxon>Bacillati</taxon>
        <taxon>Actinomycetota</taxon>
        <taxon>Actinomycetes</taxon>
        <taxon>Kitasatosporales</taxon>
        <taxon>Streptomycetaceae</taxon>
        <taxon>Streptomyces</taxon>
    </lineage>
</organism>
<evidence type="ECO:0000269" key="1">
    <source>
    </source>
</evidence>
<evidence type="ECO:0000303" key="2">
    <source>
    </source>
</evidence>
<evidence type="ECO:0007744" key="3">
    <source>
        <dbReference type="PDB" id="1RPB"/>
    </source>
</evidence>
<evidence type="ECO:0007744" key="4">
    <source>
        <dbReference type="PDB" id="1RPC"/>
    </source>
</evidence>
<evidence type="ECO:0007829" key="5">
    <source>
        <dbReference type="PDB" id="1RPB"/>
    </source>
</evidence>
<feature type="peptide" id="PRO_0000044214" description="Tricyclic peptide RP 71955" evidence="1">
    <location>
        <begin position="1"/>
        <end position="21"/>
    </location>
</feature>
<feature type="disulfide bond" evidence="1 3 4">
    <location>
        <begin position="1"/>
        <end position="13"/>
    </location>
</feature>
<feature type="disulfide bond" evidence="1 3 4">
    <location>
        <begin position="7"/>
        <end position="19"/>
    </location>
</feature>
<feature type="cross-link" description="3-cysteinyl-aspartic acid (Cys-Asp)" evidence="1">
    <location>
        <begin position="1"/>
        <end position="9"/>
    </location>
</feature>
<feature type="strand" evidence="5">
    <location>
        <begin position="5"/>
        <end position="7"/>
    </location>
</feature>
<feature type="strand" evidence="5">
    <location>
        <begin position="9"/>
        <end position="13"/>
    </location>
</feature>
<feature type="strand" evidence="5">
    <location>
        <begin position="15"/>
        <end position="18"/>
    </location>
</feature>
<comment type="function">
    <text>Active against HIV-1 virus in vitro.</text>
</comment>
<keyword id="KW-0002">3D-structure</keyword>
<keyword id="KW-0903">Direct protein sequencing</keyword>
<keyword id="KW-1015">Disulfide bond</keyword>
<keyword id="KW-0883">Thioether bond</keyword>
<dbReference type="PIR" id="A53630">
    <property type="entry name" value="A53630"/>
</dbReference>
<dbReference type="PDB" id="1RPB">
    <property type="method" value="NMR"/>
    <property type="chains" value="A=1-21"/>
</dbReference>
<dbReference type="PDB" id="1RPC">
    <property type="method" value="NMR"/>
    <property type="chains" value="A=1-21"/>
</dbReference>
<dbReference type="PDBsum" id="1RPB"/>
<dbReference type="PDBsum" id="1RPC"/>
<dbReference type="SMR" id="P37046"/>
<dbReference type="EvolutionaryTrace" id="P37046"/>
<name>3CP1_STRS9</name>
<sequence>CLGIGSCNDFAGCGYAVVCFW</sequence>
<proteinExistence type="evidence at protein level"/>
<protein>
    <recommendedName>
        <fullName evidence="2">Tricyclic peptide RP 71955</fullName>
    </recommendedName>
</protein>